<reference key="1">
    <citation type="journal article" date="1996" name="J. Neurosci.">
        <title>A murine neural-specific homolog corrects cholinergic defects in Caenorhabditis elegans unc-18 mutants.</title>
        <authorList>
            <person name="Gengyo-Ando K."/>
            <person name="Kitayama H."/>
            <person name="Mukaida M."/>
            <person name="Ikawa Y."/>
        </authorList>
    </citation>
    <scope>NUCLEOTIDE SEQUENCE [MRNA] (ISOFORM 1)</scope>
    <source>
        <strain>C57BL/6J</strain>
        <tissue>Brain</tissue>
    </source>
</reference>
<reference key="2">
    <citation type="journal article" date="1998" name="J. Biol. Chem.">
        <title>Genomic structure of MUNC18-1 protein, which is involved in docking and fusion of synaptic vesicles in brain.</title>
        <authorList>
            <person name="Gotoh K."/>
            <person name="Yokota H."/>
            <person name="Kikuya E."/>
            <person name="Watanabe T."/>
            <person name="Oishi M."/>
        </authorList>
    </citation>
    <scope>NUCLEOTIDE SEQUENCE [GENOMIC DNA]</scope>
    <source>
        <strain>129/Sv</strain>
    </source>
</reference>
<reference key="3">
    <citation type="submission" date="2000-12" db="EMBL/GenBank/DDBJ databases">
        <title>Characterization of candidate genes for multiple ethanol influenced traits on mouse chromosome 2.</title>
        <authorList>
            <person name="Fehr C."/>
            <person name="Buck K.J."/>
        </authorList>
    </citation>
    <scope>NUCLEOTIDE SEQUENCE [MRNA] (ISOFORM 1)</scope>
    <source>
        <strain>C57BL/6J</strain>
        <strain>DBA/2J</strain>
        <tissue>Brain</tissue>
    </source>
</reference>
<reference key="4">
    <citation type="journal article" date="2009" name="PLoS Biol.">
        <title>Lineage-specific biology revealed by a finished genome assembly of the mouse.</title>
        <authorList>
            <person name="Church D.M."/>
            <person name="Goodstadt L."/>
            <person name="Hillier L.W."/>
            <person name="Zody M.C."/>
            <person name="Goldstein S."/>
            <person name="She X."/>
            <person name="Bult C.J."/>
            <person name="Agarwala R."/>
            <person name="Cherry J.L."/>
            <person name="DiCuccio M."/>
            <person name="Hlavina W."/>
            <person name="Kapustin Y."/>
            <person name="Meric P."/>
            <person name="Maglott D."/>
            <person name="Birtle Z."/>
            <person name="Marques A.C."/>
            <person name="Graves T."/>
            <person name="Zhou S."/>
            <person name="Teague B."/>
            <person name="Potamousis K."/>
            <person name="Churas C."/>
            <person name="Place M."/>
            <person name="Herschleb J."/>
            <person name="Runnheim R."/>
            <person name="Forrest D."/>
            <person name="Amos-Landgraf J."/>
            <person name="Schwartz D.C."/>
            <person name="Cheng Z."/>
            <person name="Lindblad-Toh K."/>
            <person name="Eichler E.E."/>
            <person name="Ponting C.P."/>
        </authorList>
    </citation>
    <scope>NUCLEOTIDE SEQUENCE [LARGE SCALE GENOMIC DNA]</scope>
    <source>
        <strain>C57BL/6J</strain>
    </source>
</reference>
<reference key="5">
    <citation type="journal article" date="2004" name="Genome Res.">
        <title>The status, quality, and expansion of the NIH full-length cDNA project: the Mammalian Gene Collection (MGC).</title>
        <authorList>
            <consortium name="The MGC Project Team"/>
        </authorList>
    </citation>
    <scope>NUCLEOTIDE SEQUENCE [LARGE SCALE MRNA] (ISOFORM 2)</scope>
    <source>
        <tissue>Eye</tissue>
    </source>
</reference>
<reference key="6">
    <citation type="submission" date="2009-01" db="UniProtKB">
        <authorList>
            <person name="Lubec G."/>
            <person name="Klug S."/>
            <person name="Kang S.U."/>
            <person name="Sunyer B."/>
            <person name="Chen W.-Q."/>
        </authorList>
    </citation>
    <scope>PROTEIN SEQUENCE OF 30-39; 47-98; 101-120; 162-184; 193-225; 228-235; 266-275; 278-314; 326-332; 344-356; 368-382; 389-425; 468-518 AND 537-594</scope>
    <source>
        <strain>C57BL/6J</strain>
        <strain>OF1</strain>
        <tissue>Brain</tissue>
        <tissue>Hippocampus</tissue>
    </source>
</reference>
<reference key="7">
    <citation type="journal article" date="2007" name="Proc. Natl. Acad. Sci. U.S.A.">
        <title>Large-scale phosphorylation analysis of mouse liver.</title>
        <authorList>
            <person name="Villen J."/>
            <person name="Beausoleil S.A."/>
            <person name="Gerber S.A."/>
            <person name="Gygi S.P."/>
        </authorList>
    </citation>
    <scope>IDENTIFICATION BY MASS SPECTROMETRY [LARGE SCALE ANALYSIS]</scope>
    <source>
        <tissue>Liver</tissue>
    </source>
</reference>
<reference key="8">
    <citation type="journal article" date="2010" name="Cell">
        <title>A tissue-specific atlas of mouse protein phosphorylation and expression.</title>
        <authorList>
            <person name="Huttlin E.L."/>
            <person name="Jedrychowski M.P."/>
            <person name="Elias J.E."/>
            <person name="Goswami T."/>
            <person name="Rad R."/>
            <person name="Beausoleil S.A."/>
            <person name="Villen J."/>
            <person name="Haas W."/>
            <person name="Sowa M.E."/>
            <person name="Gygi S.P."/>
        </authorList>
    </citation>
    <scope>PHOSPHORYLATION [LARGE SCALE ANALYSIS] AT SER-509; SER-511 AND SER-516</scope>
    <scope>IDENTIFICATION BY MASS SPECTROMETRY [LARGE SCALE ANALYSIS]</scope>
    <source>
        <tissue>Brain</tissue>
        <tissue>Brown adipose tissue</tissue>
        <tissue>Heart</tissue>
        <tissue>Kidney</tissue>
        <tissue>Liver</tissue>
        <tissue>Lung</tissue>
        <tissue>Spleen</tissue>
        <tissue>Testis</tissue>
    </source>
</reference>
<reference key="9">
    <citation type="journal article" date="2011" name="Invest. Ophthalmol. Vis. Sci.">
        <title>Insight into the role of Ca2+-binding protein 5 in vesicle exocytosis.</title>
        <authorList>
            <person name="Sokal I."/>
            <person name="Haeseleer F."/>
        </authorList>
    </citation>
    <scope>TISSUE SPECIFICITY</scope>
</reference>
<reference key="10">
    <citation type="journal article" date="2011" name="PLoS ONE">
        <title>Structure-function study of mammalian Munc18-1 and C. elegans UNC-18 implicates domain 3b in the regulation of exocytosis.</title>
        <authorList>
            <person name="Graham M.E."/>
            <person name="Prescott G.R."/>
            <person name="Johnson J.R."/>
            <person name="Jones M."/>
            <person name="Walmesley A."/>
            <person name="Haynes L.P."/>
            <person name="Morgan A."/>
            <person name="Burgoyne R.D."/>
            <person name="Barclay J.W."/>
        </authorList>
    </citation>
    <scope>FUNCTION</scope>
    <scope>INTERACTION WITH STX1A AND APBA1</scope>
</reference>
<reference key="11">
    <citation type="journal article" date="2017" name="J. Neurosci.">
        <title>UNC-18 and Tomosyn Antagonistically Control Synaptic Vesicle Priming Downstream of UNC-13 in Caenorhabditis elegans.</title>
        <authorList>
            <person name="Park S."/>
            <person name="Bin N.R."/>
            <person name="Yu B."/>
            <person name="Wong R."/>
            <person name="Sitarska E."/>
            <person name="Sugita K."/>
            <person name="Ma K."/>
            <person name="Xu J."/>
            <person name="Tien C.W."/>
            <person name="Algouneh A."/>
            <person name="Turlova E."/>
            <person name="Wang S."/>
            <person name="Siriya P."/>
            <person name="Shahid W."/>
            <person name="Kalia L."/>
            <person name="Feng Z.P."/>
            <person name="Monnier P.P."/>
            <person name="Sun H.S."/>
            <person name="Zhen M."/>
            <person name="Gao S."/>
            <person name="Rizo J."/>
            <person name="Sugita S."/>
        </authorList>
    </citation>
    <scope>FUNCTION</scope>
    <scope>INTERACTION WITH STX1A</scope>
    <scope>MUTAGENESIS OF PRO-335</scope>
</reference>
<accession>O08599</accession>
<accession>A2ARS2</accession>
<accession>A2ARS3</accession>
<accession>A2ARS4</accession>
<accession>Q5WAC6</accession>
<accession>Q8VD51</accession>
<organism>
    <name type="scientific">Mus musculus</name>
    <name type="common">Mouse</name>
    <dbReference type="NCBI Taxonomy" id="10090"/>
    <lineage>
        <taxon>Eukaryota</taxon>
        <taxon>Metazoa</taxon>
        <taxon>Chordata</taxon>
        <taxon>Craniata</taxon>
        <taxon>Vertebrata</taxon>
        <taxon>Euteleostomi</taxon>
        <taxon>Mammalia</taxon>
        <taxon>Eutheria</taxon>
        <taxon>Euarchontoglires</taxon>
        <taxon>Glires</taxon>
        <taxon>Rodentia</taxon>
        <taxon>Myomorpha</taxon>
        <taxon>Muroidea</taxon>
        <taxon>Muridae</taxon>
        <taxon>Murinae</taxon>
        <taxon>Mus</taxon>
        <taxon>Mus</taxon>
    </lineage>
</organism>
<protein>
    <recommendedName>
        <fullName>Syntaxin-binding protein 1</fullName>
    </recommendedName>
    <alternativeName>
        <fullName>Protein unc-18 homolog 1</fullName>
        <shortName>Unc18-1</shortName>
    </alternativeName>
    <alternativeName>
        <fullName>Protein unc-18 homolog A</fullName>
        <shortName>Unc-18A</shortName>
    </alternativeName>
</protein>
<proteinExistence type="evidence at protein level"/>
<sequence length="594" mass="67569">MAPIGLKAVVGEKIMHDVIKKVKKKGEWKVLVVDQLSMRMLSSCCKMTDIMTEGITIVEDINKRREPLPSLEAVYLITPSEKSVHSLISDFKDPPTAKYRAAHVFFTDSCPDALFNELVKSRAAKVIKTLTEINIAFLPYESQVYSLDSADSFQSFYSPHKAQMKNPILERLAEQIATLCATLKEYPAVRYRGEYKDNALLAQLIQDKLDAYKADDPTMGEGPDKARSQLLILDRGFDPSSPVLHELTFQAMSYDLLPIENDVYKYETSGIGEARVKEVLLDEDDDLWIALRHKHIAEVSQEVTRSLKDFSSSKRMNTGEKTTMRDLSQMLKKMPQYQKELSKYSTHLHLAEDCMKHYQGTVDKLCRVEQDLAMGTDAEGEKIKDPMRAIVPILLDANVSTYDKIRIILLYIFLKNGITEENLNKLIQHAQIPPEDSEIITNMAHLGVPIVTDSTLRRRSKPERKERISEQTYQLSRWTPIIKDIMEDTIEDKLDTKHYPYISTRSSASFSTTAVSARYGHWHKNKAPGEYRSGPRLIIFILGGVSLNEMRCAYEVTQANGKWEVLIGSTHILTPQKLLDTLKKLNKTDEEISS</sequence>
<keyword id="KW-0025">Alternative splicing</keyword>
<keyword id="KW-0963">Cytoplasm</keyword>
<keyword id="KW-0903">Direct protein sequencing</keyword>
<keyword id="KW-0472">Membrane</keyword>
<keyword id="KW-0597">Phosphoprotein</keyword>
<keyword id="KW-0653">Protein transport</keyword>
<keyword id="KW-1185">Reference proteome</keyword>
<keyword id="KW-0813">Transport</keyword>
<gene>
    <name type="primary">Stxbp1</name>
</gene>
<name>STXB1_MOUSE</name>
<feature type="chain" id="PRO_0000206278" description="Syntaxin-binding protein 1">
    <location>
        <begin position="1"/>
        <end position="594"/>
    </location>
</feature>
<feature type="modified residue" description="Phosphoserine" evidence="4">
    <location>
        <position position="476"/>
    </location>
</feature>
<feature type="modified residue" description="Phosphoserine" evidence="10">
    <location>
        <position position="509"/>
    </location>
</feature>
<feature type="modified residue" description="Phosphoserine" evidence="10">
    <location>
        <position position="511"/>
    </location>
</feature>
<feature type="modified residue" description="Phosphoserine" evidence="10">
    <location>
        <position position="516"/>
    </location>
</feature>
<feature type="modified residue" description="Phosphoserine" evidence="4">
    <location>
        <position position="593"/>
    </location>
</feature>
<feature type="splice variant" id="VSP_010496" description="In isoform 2." evidence="8">
    <original>QKLLDTLKKLNKTDEEISS</original>
    <variation>TKFLMDLRHPDFRESSRVSFEDQAPTME</variation>
    <location>
        <begin position="576"/>
        <end position="594"/>
    </location>
</feature>
<feature type="sequence variant" description="In strain: DBA/2J.">
    <original>D</original>
    <variation>N</variation>
    <location>
        <position position="216"/>
    </location>
</feature>
<feature type="mutagenesis site" description="Enhances binding to SNARE complex component STX1A promoting formation of the SNARE complex and thereby increasing release of neurotransmitters from neurons and thus synaptic transmission." evidence="7">
    <original>P</original>
    <variation>A</variation>
    <location>
        <position position="335"/>
    </location>
</feature>
<feature type="sequence conflict" description="In Ref. 1; BAA19479." evidence="9" ref="1">
    <original>A</original>
    <variation>R</variation>
    <location>
        <position position="101"/>
    </location>
</feature>
<feature type="sequence conflict" description="In Ref. 2; BAA32486." evidence="9" ref="2">
    <original>R</original>
    <variation>H</variation>
    <location>
        <position position="367"/>
    </location>
</feature>
<feature type="sequence conflict" description="In Ref. 1; BAA19479." evidence="9" ref="1">
    <original>L</original>
    <variation>F</variation>
    <location>
        <position position="537"/>
    </location>
</feature>
<feature type="sequence conflict" description="In Ref. 1; BAA19479." evidence="9" ref="1">
    <original>G</original>
    <variation>A</variation>
    <location>
        <position position="561"/>
    </location>
</feature>
<evidence type="ECO:0000250" key="1"/>
<evidence type="ECO:0000250" key="2">
    <source>
        <dbReference type="UniProtKB" id="P61763"/>
    </source>
</evidence>
<evidence type="ECO:0000250" key="3">
    <source>
        <dbReference type="UniProtKB" id="P61764"/>
    </source>
</evidence>
<evidence type="ECO:0000250" key="4">
    <source>
        <dbReference type="UniProtKB" id="P61765"/>
    </source>
</evidence>
<evidence type="ECO:0000269" key="5">
    <source>
    </source>
</evidence>
<evidence type="ECO:0000269" key="6">
    <source>
    </source>
</evidence>
<evidence type="ECO:0000269" key="7">
    <source>
    </source>
</evidence>
<evidence type="ECO:0000303" key="8">
    <source>
    </source>
</evidence>
<evidence type="ECO:0000305" key="9"/>
<evidence type="ECO:0007744" key="10">
    <source>
    </source>
</evidence>
<dbReference type="EMBL" id="D45903">
    <property type="protein sequence ID" value="BAA19479.1"/>
    <property type="molecule type" value="mRNA"/>
</dbReference>
<dbReference type="EMBL" id="AB012697">
    <property type="protein sequence ID" value="BAA32486.1"/>
    <property type="molecule type" value="Genomic_DNA"/>
</dbReference>
<dbReference type="EMBL" id="AF326545">
    <property type="protein sequence ID" value="AAL37391.1"/>
    <property type="molecule type" value="mRNA"/>
</dbReference>
<dbReference type="EMBL" id="AF326563">
    <property type="protein sequence ID" value="AAL37409.1"/>
    <property type="molecule type" value="mRNA"/>
</dbReference>
<dbReference type="EMBL" id="AL845471">
    <property type="protein sequence ID" value="CAM20726.1"/>
    <property type="status" value="ALT_SEQ"/>
    <property type="molecule type" value="Genomic_DNA"/>
</dbReference>
<dbReference type="EMBL" id="AL845471">
    <property type="protein sequence ID" value="CAM20727.1"/>
    <property type="molecule type" value="Genomic_DNA"/>
</dbReference>
<dbReference type="EMBL" id="AL845471">
    <property type="protein sequence ID" value="CAM20728.1"/>
    <property type="molecule type" value="Genomic_DNA"/>
</dbReference>
<dbReference type="EMBL" id="BC031728">
    <property type="protein sequence ID" value="AAH31728.1"/>
    <property type="molecule type" value="mRNA"/>
</dbReference>
<dbReference type="CCDS" id="CCDS15933.1">
    <molecule id="O08599-1"/>
</dbReference>
<dbReference type="CCDS" id="CCDS50572.1">
    <molecule id="O08599-2"/>
</dbReference>
<dbReference type="RefSeq" id="NP_001107041.1">
    <molecule id="O08599-2"/>
    <property type="nucleotide sequence ID" value="NM_001113569.1"/>
</dbReference>
<dbReference type="RefSeq" id="NP_033321.2">
    <molecule id="O08599-1"/>
    <property type="nucleotide sequence ID" value="NM_009295.2"/>
</dbReference>
<dbReference type="SMR" id="O08599"/>
<dbReference type="BioGRID" id="203564">
    <property type="interactions" value="85"/>
</dbReference>
<dbReference type="DIP" id="DIP-31951N"/>
<dbReference type="FunCoup" id="O08599">
    <property type="interactions" value="2576"/>
</dbReference>
<dbReference type="IntAct" id="O08599">
    <property type="interactions" value="19"/>
</dbReference>
<dbReference type="MINT" id="O08599"/>
<dbReference type="STRING" id="10090.ENSMUSP00000089051"/>
<dbReference type="GlyGen" id="O08599">
    <property type="glycosylation" value="3 sites, 1 O-linked glycan (3 sites)"/>
</dbReference>
<dbReference type="iPTMnet" id="O08599"/>
<dbReference type="MetOSite" id="O08599"/>
<dbReference type="PhosphoSitePlus" id="O08599"/>
<dbReference type="SwissPalm" id="O08599"/>
<dbReference type="jPOST" id="O08599"/>
<dbReference type="PaxDb" id="10090-ENSMUSP00000089051"/>
<dbReference type="PeptideAtlas" id="O08599"/>
<dbReference type="ProteomicsDB" id="254770">
    <molecule id="O08599-1"/>
</dbReference>
<dbReference type="ProteomicsDB" id="254771">
    <molecule id="O08599-2"/>
</dbReference>
<dbReference type="Pumba" id="O08599"/>
<dbReference type="Antibodypedia" id="2191">
    <property type="antibodies" value="517 antibodies from 40 providers"/>
</dbReference>
<dbReference type="DNASU" id="20910"/>
<dbReference type="Ensembl" id="ENSMUST00000050000.16">
    <molecule id="O08599-1"/>
    <property type="protein sequence ID" value="ENSMUSP00000052440.10"/>
    <property type="gene ID" value="ENSMUSG00000026797.17"/>
</dbReference>
<dbReference type="Ensembl" id="ENSMUST00000077458.7">
    <molecule id="O08599-2"/>
    <property type="protein sequence ID" value="ENSMUSP00000089051.4"/>
    <property type="gene ID" value="ENSMUSG00000026797.17"/>
</dbReference>
<dbReference type="GeneID" id="20910"/>
<dbReference type="KEGG" id="mmu:20910"/>
<dbReference type="UCSC" id="uc008jha.2">
    <molecule id="O08599-1"/>
    <property type="organism name" value="mouse"/>
</dbReference>
<dbReference type="UCSC" id="uc008jhb.2">
    <molecule id="O08599-2"/>
    <property type="organism name" value="mouse"/>
</dbReference>
<dbReference type="AGR" id="MGI:107363"/>
<dbReference type="CTD" id="6812"/>
<dbReference type="MGI" id="MGI:107363">
    <property type="gene designation" value="Stxbp1"/>
</dbReference>
<dbReference type="VEuPathDB" id="HostDB:ENSMUSG00000026797"/>
<dbReference type="eggNOG" id="KOG1300">
    <property type="taxonomic scope" value="Eukaryota"/>
</dbReference>
<dbReference type="GeneTree" id="ENSGT00940000155127"/>
<dbReference type="HOGENOM" id="CLU_009210_2_0_1"/>
<dbReference type="InParanoid" id="O08599"/>
<dbReference type="OMA" id="PFTRPHT"/>
<dbReference type="OrthoDB" id="41184at9989"/>
<dbReference type="PhylomeDB" id="O08599"/>
<dbReference type="TreeFam" id="TF313242"/>
<dbReference type="Reactome" id="R-MMU-181429">
    <property type="pathway name" value="Serotonin Neurotransmitter Release Cycle"/>
</dbReference>
<dbReference type="Reactome" id="R-MMU-181430">
    <property type="pathway name" value="Norepinephrine Neurotransmitter Release Cycle"/>
</dbReference>
<dbReference type="Reactome" id="R-MMU-210500">
    <property type="pathway name" value="Glutamate Neurotransmitter Release Cycle"/>
</dbReference>
<dbReference type="Reactome" id="R-MMU-212676">
    <property type="pathway name" value="Dopamine Neurotransmitter Release Cycle"/>
</dbReference>
<dbReference type="Reactome" id="R-MMU-264642">
    <property type="pathway name" value="Acetylcholine Neurotransmitter Release Cycle"/>
</dbReference>
<dbReference type="Reactome" id="R-MMU-888590">
    <property type="pathway name" value="GABA synthesis, release, reuptake and degradation"/>
</dbReference>
<dbReference type="BioGRID-ORCS" id="20910">
    <property type="hits" value="4 hits in 79 CRISPR screens"/>
</dbReference>
<dbReference type="CD-CODE" id="CE726F99">
    <property type="entry name" value="Postsynaptic density"/>
</dbReference>
<dbReference type="ChiTaRS" id="Stxbp1">
    <property type="organism name" value="mouse"/>
</dbReference>
<dbReference type="PRO" id="PR:O08599"/>
<dbReference type="Proteomes" id="UP000000589">
    <property type="component" value="Chromosome 2"/>
</dbReference>
<dbReference type="RNAct" id="O08599">
    <property type="molecule type" value="protein"/>
</dbReference>
<dbReference type="Bgee" id="ENSMUSG00000026797">
    <property type="expression patterns" value="Expressed in retinal neural layer and 233 other cell types or tissues"/>
</dbReference>
<dbReference type="ExpressionAtlas" id="O08599">
    <property type="expression patterns" value="baseline and differential"/>
</dbReference>
<dbReference type="GO" id="GO:0030424">
    <property type="term" value="C:axon"/>
    <property type="evidence" value="ECO:0000314"/>
    <property type="project" value="SynGO-UCL"/>
</dbReference>
<dbReference type="GO" id="GO:0098888">
    <property type="term" value="C:extrinsic component of presynaptic membrane"/>
    <property type="evidence" value="ECO:0000314"/>
    <property type="project" value="ARUK-UCL"/>
</dbReference>
<dbReference type="GO" id="GO:0098978">
    <property type="term" value="C:glutamatergic synapse"/>
    <property type="evidence" value="ECO:0000314"/>
    <property type="project" value="SynGO"/>
</dbReference>
<dbReference type="GO" id="GO:0005739">
    <property type="term" value="C:mitochondrion"/>
    <property type="evidence" value="ECO:0007005"/>
    <property type="project" value="MGI"/>
</dbReference>
<dbReference type="GO" id="GO:0043209">
    <property type="term" value="C:myelin sheath"/>
    <property type="evidence" value="ECO:0007005"/>
    <property type="project" value="UniProtKB"/>
</dbReference>
<dbReference type="GO" id="GO:0005654">
    <property type="term" value="C:nucleoplasm"/>
    <property type="evidence" value="ECO:0007669"/>
    <property type="project" value="Ensembl"/>
</dbReference>
<dbReference type="GO" id="GO:0098688">
    <property type="term" value="C:parallel fiber to Purkinje cell synapse"/>
    <property type="evidence" value="ECO:0000314"/>
    <property type="project" value="SynGO"/>
</dbReference>
<dbReference type="GO" id="GO:0048471">
    <property type="term" value="C:perinuclear region of cytoplasm"/>
    <property type="evidence" value="ECO:0007669"/>
    <property type="project" value="Ensembl"/>
</dbReference>
<dbReference type="GO" id="GO:0045335">
    <property type="term" value="C:phagocytic vesicle"/>
    <property type="evidence" value="ECO:0000314"/>
    <property type="project" value="MGI"/>
</dbReference>
<dbReference type="GO" id="GO:0005886">
    <property type="term" value="C:plasma membrane"/>
    <property type="evidence" value="ECO:0000314"/>
    <property type="project" value="SynGO-UCL"/>
</dbReference>
<dbReference type="GO" id="GO:0031091">
    <property type="term" value="C:platelet alpha granule"/>
    <property type="evidence" value="ECO:0007669"/>
    <property type="project" value="Ensembl"/>
</dbReference>
<dbReference type="GO" id="GO:0098794">
    <property type="term" value="C:postsynapse"/>
    <property type="evidence" value="ECO:0007669"/>
    <property type="project" value="Ensembl"/>
</dbReference>
<dbReference type="GO" id="GO:0098831">
    <property type="term" value="C:presynaptic active zone cytoplasmic component"/>
    <property type="evidence" value="ECO:0000314"/>
    <property type="project" value="SynGO"/>
</dbReference>
<dbReference type="GO" id="GO:0099523">
    <property type="term" value="C:presynaptic cytosol"/>
    <property type="evidence" value="ECO:0000314"/>
    <property type="project" value="SynGO"/>
</dbReference>
<dbReference type="GO" id="GO:0032991">
    <property type="term" value="C:protein-containing complex"/>
    <property type="evidence" value="ECO:0007669"/>
    <property type="project" value="Ensembl"/>
</dbReference>
<dbReference type="GO" id="GO:0042802">
    <property type="term" value="F:identical protein binding"/>
    <property type="evidence" value="ECO:0007669"/>
    <property type="project" value="Ensembl"/>
</dbReference>
<dbReference type="GO" id="GO:0043274">
    <property type="term" value="F:phospholipase binding"/>
    <property type="evidence" value="ECO:0007669"/>
    <property type="project" value="Ensembl"/>
</dbReference>
<dbReference type="GO" id="GO:0019904">
    <property type="term" value="F:protein domain specific binding"/>
    <property type="evidence" value="ECO:0007669"/>
    <property type="project" value="Ensembl"/>
</dbReference>
<dbReference type="GO" id="GO:0019901">
    <property type="term" value="F:protein kinase binding"/>
    <property type="evidence" value="ECO:0007669"/>
    <property type="project" value="Ensembl"/>
</dbReference>
<dbReference type="GO" id="GO:0017075">
    <property type="term" value="F:syntaxin-1 binding"/>
    <property type="evidence" value="ECO:0000314"/>
    <property type="project" value="ParkinsonsUK-UCL"/>
</dbReference>
<dbReference type="GO" id="GO:0007412">
    <property type="term" value="P:axon target recognition"/>
    <property type="evidence" value="ECO:0000315"/>
    <property type="project" value="MGI"/>
</dbReference>
<dbReference type="GO" id="GO:0071346">
    <property type="term" value="P:cellular response to type II interferon"/>
    <property type="evidence" value="ECO:0000314"/>
    <property type="project" value="MGI"/>
</dbReference>
<dbReference type="GO" id="GO:0003006">
    <property type="term" value="P:developmental process involved in reproduction"/>
    <property type="evidence" value="ECO:0007669"/>
    <property type="project" value="Ensembl"/>
</dbReference>
<dbReference type="GO" id="GO:0051649">
    <property type="term" value="P:establishment of localization in cell"/>
    <property type="evidence" value="ECO:0000315"/>
    <property type="project" value="MGI"/>
</dbReference>
<dbReference type="GO" id="GO:0006887">
    <property type="term" value="P:exocytosis"/>
    <property type="evidence" value="ECO:0000315"/>
    <property type="project" value="MGI"/>
</dbReference>
<dbReference type="GO" id="GO:0060292">
    <property type="term" value="P:long-term synaptic depression"/>
    <property type="evidence" value="ECO:0000315"/>
    <property type="project" value="MGI"/>
</dbReference>
<dbReference type="GO" id="GO:0043524">
    <property type="term" value="P:negative regulation of neuron apoptotic process"/>
    <property type="evidence" value="ECO:0000315"/>
    <property type="project" value="MGI"/>
</dbReference>
<dbReference type="GO" id="GO:0031333">
    <property type="term" value="P:negative regulation of protein-containing complex assembly"/>
    <property type="evidence" value="ECO:0007669"/>
    <property type="project" value="Ensembl"/>
</dbReference>
<dbReference type="GO" id="GO:0032229">
    <property type="term" value="P:negative regulation of synaptic transmission, GABAergic"/>
    <property type="evidence" value="ECO:0000314"/>
    <property type="project" value="MGI"/>
</dbReference>
<dbReference type="GO" id="GO:0007274">
    <property type="term" value="P:neuromuscular synaptic transmission"/>
    <property type="evidence" value="ECO:0000315"/>
    <property type="project" value="MGI"/>
</dbReference>
<dbReference type="GO" id="GO:0051402">
    <property type="term" value="P:neuron apoptotic process"/>
    <property type="evidence" value="ECO:0000315"/>
    <property type="project" value="MGI"/>
</dbReference>
<dbReference type="GO" id="GO:0007269">
    <property type="term" value="P:neurotransmitter secretion"/>
    <property type="evidence" value="ECO:0000315"/>
    <property type="project" value="MGI"/>
</dbReference>
<dbReference type="GO" id="GO:0070527">
    <property type="term" value="P:platelet aggregation"/>
    <property type="evidence" value="ECO:0007669"/>
    <property type="project" value="Ensembl"/>
</dbReference>
<dbReference type="GO" id="GO:0002576">
    <property type="term" value="P:platelet degranulation"/>
    <property type="evidence" value="ECO:0007669"/>
    <property type="project" value="Ensembl"/>
</dbReference>
<dbReference type="GO" id="GO:0045956">
    <property type="term" value="P:positive regulation of calcium ion-dependent exocytosis"/>
    <property type="evidence" value="ECO:0000314"/>
    <property type="project" value="MGI"/>
</dbReference>
<dbReference type="GO" id="GO:1903296">
    <property type="term" value="P:positive regulation of glutamate secretion, neurotransmission"/>
    <property type="evidence" value="ECO:0007669"/>
    <property type="project" value="Ensembl"/>
</dbReference>
<dbReference type="GO" id="GO:0043306">
    <property type="term" value="P:positive regulation of mast cell degranulation"/>
    <property type="evidence" value="ECO:0007669"/>
    <property type="project" value="Ensembl"/>
</dbReference>
<dbReference type="GO" id="GO:0106022">
    <property type="term" value="P:positive regulation of vesicle docking"/>
    <property type="evidence" value="ECO:0007669"/>
    <property type="project" value="Ensembl"/>
</dbReference>
<dbReference type="GO" id="GO:0072659">
    <property type="term" value="P:protein localization to plasma membrane"/>
    <property type="evidence" value="ECO:0007669"/>
    <property type="project" value="Ensembl"/>
</dbReference>
<dbReference type="GO" id="GO:0050821">
    <property type="term" value="P:protein stabilization"/>
    <property type="evidence" value="ECO:0000266"/>
    <property type="project" value="MGI"/>
</dbReference>
<dbReference type="GO" id="GO:0015031">
    <property type="term" value="P:protein transport"/>
    <property type="evidence" value="ECO:0007669"/>
    <property type="project" value="UniProtKB-KW"/>
</dbReference>
<dbReference type="GO" id="GO:2000367">
    <property type="term" value="P:regulation of acrosomal vesicle exocytosis"/>
    <property type="evidence" value="ECO:0007669"/>
    <property type="project" value="Ensembl"/>
</dbReference>
<dbReference type="GO" id="GO:0010807">
    <property type="term" value="P:regulation of synaptic vesicle priming"/>
    <property type="evidence" value="ECO:0007669"/>
    <property type="project" value="Ensembl"/>
</dbReference>
<dbReference type="GO" id="GO:0031338">
    <property type="term" value="P:regulation of vesicle fusion"/>
    <property type="evidence" value="ECO:0007669"/>
    <property type="project" value="Ensembl"/>
</dbReference>
<dbReference type="GO" id="GO:0032355">
    <property type="term" value="P:response to estradiol"/>
    <property type="evidence" value="ECO:0007669"/>
    <property type="project" value="Ensembl"/>
</dbReference>
<dbReference type="GO" id="GO:0035493">
    <property type="term" value="P:SNARE complex assembly"/>
    <property type="evidence" value="ECO:0007669"/>
    <property type="project" value="Ensembl"/>
</dbReference>
<dbReference type="GO" id="GO:0031629">
    <property type="term" value="P:synaptic vesicle fusion to presynaptic active zone membrane"/>
    <property type="evidence" value="ECO:0000304"/>
    <property type="project" value="ParkinsonsUK-UCL"/>
</dbReference>
<dbReference type="GO" id="GO:0016188">
    <property type="term" value="P:synaptic vesicle maturation"/>
    <property type="evidence" value="ECO:0000315"/>
    <property type="project" value="MGI"/>
</dbReference>
<dbReference type="GO" id="GO:0016082">
    <property type="term" value="P:synaptic vesicle priming"/>
    <property type="evidence" value="ECO:0000314"/>
    <property type="project" value="SynGO"/>
</dbReference>
<dbReference type="GO" id="GO:0006904">
    <property type="term" value="P:vesicle docking involved in exocytosis"/>
    <property type="evidence" value="ECO:0000315"/>
    <property type="project" value="ParkinsonsUK-UCL"/>
</dbReference>
<dbReference type="FunFam" id="1.25.40.60:FF:000001">
    <property type="entry name" value="syntaxin-binding protein 1 isoform X2"/>
    <property type="match status" value="1"/>
</dbReference>
<dbReference type="FunFam" id="3.40.50.2060:FF:000001">
    <property type="entry name" value="syntaxin-binding protein 1 isoform X2"/>
    <property type="match status" value="1"/>
</dbReference>
<dbReference type="FunFam" id="3.90.830.10:FF:000001">
    <property type="entry name" value="syntaxin-binding protein 1 isoform X2"/>
    <property type="match status" value="1"/>
</dbReference>
<dbReference type="Gene3D" id="1.25.40.60">
    <property type="match status" value="1"/>
</dbReference>
<dbReference type="Gene3D" id="3.40.50.1910">
    <property type="match status" value="1"/>
</dbReference>
<dbReference type="Gene3D" id="3.40.50.2060">
    <property type="match status" value="1"/>
</dbReference>
<dbReference type="Gene3D" id="3.90.830.10">
    <property type="entry name" value="Syntaxin Binding Protein 1, Chain A, domain 2"/>
    <property type="match status" value="1"/>
</dbReference>
<dbReference type="InterPro" id="IPR043154">
    <property type="entry name" value="Sec-1-like_dom1"/>
</dbReference>
<dbReference type="InterPro" id="IPR043127">
    <property type="entry name" value="Sec-1-like_dom3a"/>
</dbReference>
<dbReference type="InterPro" id="IPR001619">
    <property type="entry name" value="Sec1-like"/>
</dbReference>
<dbReference type="InterPro" id="IPR027482">
    <property type="entry name" value="Sec1-like_dom2"/>
</dbReference>
<dbReference type="InterPro" id="IPR036045">
    <property type="entry name" value="Sec1-like_sf"/>
</dbReference>
<dbReference type="PANTHER" id="PTHR11679">
    <property type="entry name" value="VESICLE PROTEIN SORTING-ASSOCIATED"/>
    <property type="match status" value="1"/>
</dbReference>
<dbReference type="Pfam" id="PF00995">
    <property type="entry name" value="Sec1"/>
    <property type="match status" value="1"/>
</dbReference>
<dbReference type="PIRSF" id="PIRSF005715">
    <property type="entry name" value="VPS45_Sec1"/>
    <property type="match status" value="1"/>
</dbReference>
<dbReference type="SUPFAM" id="SSF56815">
    <property type="entry name" value="Sec1/munc18-like (SM) proteins"/>
    <property type="match status" value="1"/>
</dbReference>
<comment type="function">
    <text evidence="1 4 5 7">Participates in the regulation of synaptic vesicle docking and fusion through interaction with GTP-binding proteins (By similarity). Essential for neurotransmission and binds syntaxin, a component of the synaptic vesicle fusion machinery probably in a 1:1 ratio. Can interact with syntaxins 1, 2, and 3 but not syntaxin 4. Involved in the release of neurotransmitters from neurons through interacting with SNARE complex component STX1A and mediating the assembly of the SNARE complex at synaptic membranes (PubMed:21445306, PubMed:28821673). May play a role in determining the specificity of intracellular fusion reactions (By similarity).</text>
</comment>
<comment type="subunit">
    <text evidence="2 3 4 5 7">Interacts with SYTL4 (By similarity). Interacts with STX1A; the interaction recruits SNARE complex components SNAP25 and VAMP2 and mediates neurotransmitter release from neurons (PubMed:21445306, PubMed:28821673). Interacts with alpha-synuclein/SNCA; this interaction controls SNCA self-replicating aggregation (By similarity). Interacts with RAB3A; this interaction promotes RAB3A dissociation from the vesicle membrane (By similarity). Interacts with CABP5 (By similarity). Interacts with APBA1 (PubMed:21445306).</text>
</comment>
<comment type="interaction">
    <interactant intactId="EBI-15809216">
        <id>O08599-1</id>
    </interactant>
    <interactant intactId="EBI-7974891">
        <id>P31423</id>
        <label>Grm4</label>
    </interactant>
    <organismsDiffer>true</organismsDiffer>
    <experiments>2</experiments>
</comment>
<comment type="subcellular location">
    <subcellularLocation>
        <location evidence="3">Cytoplasm</location>
        <location evidence="3">Cytosol</location>
    </subcellularLocation>
    <subcellularLocation>
        <location>Membrane</location>
        <topology>Peripheral membrane protein</topology>
    </subcellularLocation>
</comment>
<comment type="alternative products">
    <event type="alternative splicing"/>
    <isoform>
        <id>O08599-1</id>
        <name>1</name>
        <sequence type="displayed"/>
    </isoform>
    <isoform>
        <id>O08599-2</id>
        <name>2</name>
        <sequence type="described" ref="VSP_010496"/>
    </isoform>
</comment>
<comment type="tissue specificity">
    <text evidence="6">Expressed in the inner and outer plexiform layers of the retina (at protein level).</text>
</comment>
<comment type="similarity">
    <text evidence="9">Belongs to the STXBP/unc-18/SEC1 family.</text>
</comment>
<comment type="sequence caution" evidence="9">
    <conflict type="erroneous gene model prediction">
        <sequence resource="EMBL-CDS" id="CAM20726"/>
    </conflict>
</comment>